<feature type="chain" id="PRO_0000261679" description="Large ribosomal subunit protein uL13">
    <location>
        <begin position="1"/>
        <end position="151"/>
    </location>
</feature>
<feature type="region of interest" description="Disordered" evidence="2">
    <location>
        <begin position="129"/>
        <end position="151"/>
    </location>
</feature>
<feature type="compositionally biased region" description="Basic and acidic residues" evidence="2">
    <location>
        <begin position="131"/>
        <end position="140"/>
    </location>
</feature>
<gene>
    <name evidence="1" type="primary">rplM</name>
    <name evidence="1" type="synonym">rpl13</name>
    <name type="ordered locus">Ava_0718</name>
</gene>
<sequence>MSKTYLPPQESLERDWYVVDATDKRLGRLASEIAMILRGKNKAHYTPHLDTGDFVIVVNAEKVAVTGKKRTQKLYRRHSGRPGGMKTETFAKLQQRLPERIVEHAVKGMLPKNSLGKQLFTKLKVYAGPTHPHDAQKPKELNINTIPGAES</sequence>
<keyword id="KW-0687">Ribonucleoprotein</keyword>
<keyword id="KW-0689">Ribosomal protein</keyword>
<name>RL13_TRIV2</name>
<protein>
    <recommendedName>
        <fullName evidence="1">Large ribosomal subunit protein uL13</fullName>
    </recommendedName>
    <alternativeName>
        <fullName evidence="3">50S ribosomal protein L13</fullName>
    </alternativeName>
</protein>
<dbReference type="EMBL" id="CP000117">
    <property type="protein sequence ID" value="ABA20342.1"/>
    <property type="molecule type" value="Genomic_DNA"/>
</dbReference>
<dbReference type="SMR" id="Q3MF94"/>
<dbReference type="STRING" id="240292.Ava_0718"/>
<dbReference type="KEGG" id="ava:Ava_0718"/>
<dbReference type="eggNOG" id="COG0102">
    <property type="taxonomic scope" value="Bacteria"/>
</dbReference>
<dbReference type="HOGENOM" id="CLU_082184_2_2_3"/>
<dbReference type="Proteomes" id="UP000002533">
    <property type="component" value="Chromosome"/>
</dbReference>
<dbReference type="GO" id="GO:0022625">
    <property type="term" value="C:cytosolic large ribosomal subunit"/>
    <property type="evidence" value="ECO:0007669"/>
    <property type="project" value="TreeGrafter"/>
</dbReference>
<dbReference type="GO" id="GO:0003729">
    <property type="term" value="F:mRNA binding"/>
    <property type="evidence" value="ECO:0007669"/>
    <property type="project" value="TreeGrafter"/>
</dbReference>
<dbReference type="GO" id="GO:0003735">
    <property type="term" value="F:structural constituent of ribosome"/>
    <property type="evidence" value="ECO:0007669"/>
    <property type="project" value="InterPro"/>
</dbReference>
<dbReference type="GO" id="GO:0017148">
    <property type="term" value="P:negative regulation of translation"/>
    <property type="evidence" value="ECO:0007669"/>
    <property type="project" value="TreeGrafter"/>
</dbReference>
<dbReference type="GO" id="GO:0006412">
    <property type="term" value="P:translation"/>
    <property type="evidence" value="ECO:0007669"/>
    <property type="project" value="UniProtKB-UniRule"/>
</dbReference>
<dbReference type="CDD" id="cd00392">
    <property type="entry name" value="Ribosomal_L13"/>
    <property type="match status" value="1"/>
</dbReference>
<dbReference type="FunFam" id="3.90.1180.10:FF:000001">
    <property type="entry name" value="50S ribosomal protein L13"/>
    <property type="match status" value="1"/>
</dbReference>
<dbReference type="Gene3D" id="3.90.1180.10">
    <property type="entry name" value="Ribosomal protein L13"/>
    <property type="match status" value="1"/>
</dbReference>
<dbReference type="HAMAP" id="MF_01366">
    <property type="entry name" value="Ribosomal_uL13"/>
    <property type="match status" value="1"/>
</dbReference>
<dbReference type="InterPro" id="IPR005822">
    <property type="entry name" value="Ribosomal_uL13"/>
</dbReference>
<dbReference type="InterPro" id="IPR005823">
    <property type="entry name" value="Ribosomal_uL13_bac-type"/>
</dbReference>
<dbReference type="InterPro" id="IPR023563">
    <property type="entry name" value="Ribosomal_uL13_CS"/>
</dbReference>
<dbReference type="InterPro" id="IPR036899">
    <property type="entry name" value="Ribosomal_uL13_sf"/>
</dbReference>
<dbReference type="NCBIfam" id="TIGR01066">
    <property type="entry name" value="rplM_bact"/>
    <property type="match status" value="1"/>
</dbReference>
<dbReference type="PANTHER" id="PTHR11545:SF2">
    <property type="entry name" value="LARGE RIBOSOMAL SUBUNIT PROTEIN UL13M"/>
    <property type="match status" value="1"/>
</dbReference>
<dbReference type="PANTHER" id="PTHR11545">
    <property type="entry name" value="RIBOSOMAL PROTEIN L13"/>
    <property type="match status" value="1"/>
</dbReference>
<dbReference type="Pfam" id="PF00572">
    <property type="entry name" value="Ribosomal_L13"/>
    <property type="match status" value="1"/>
</dbReference>
<dbReference type="PIRSF" id="PIRSF002181">
    <property type="entry name" value="Ribosomal_L13"/>
    <property type="match status" value="1"/>
</dbReference>
<dbReference type="SUPFAM" id="SSF52161">
    <property type="entry name" value="Ribosomal protein L13"/>
    <property type="match status" value="1"/>
</dbReference>
<dbReference type="PROSITE" id="PS00783">
    <property type="entry name" value="RIBOSOMAL_L13"/>
    <property type="match status" value="1"/>
</dbReference>
<reference key="1">
    <citation type="journal article" date="2014" name="Stand. Genomic Sci.">
        <title>Complete genome sequence of Anabaena variabilis ATCC 29413.</title>
        <authorList>
            <person name="Thiel T."/>
            <person name="Pratte B.S."/>
            <person name="Zhong J."/>
            <person name="Goodwin L."/>
            <person name="Copeland A."/>
            <person name="Lucas S."/>
            <person name="Han C."/>
            <person name="Pitluck S."/>
            <person name="Land M.L."/>
            <person name="Kyrpides N.C."/>
            <person name="Woyke T."/>
        </authorList>
    </citation>
    <scope>NUCLEOTIDE SEQUENCE [LARGE SCALE GENOMIC DNA]</scope>
    <source>
        <strain>ATCC 29413 / PCC 7937</strain>
    </source>
</reference>
<evidence type="ECO:0000255" key="1">
    <source>
        <dbReference type="HAMAP-Rule" id="MF_01366"/>
    </source>
</evidence>
<evidence type="ECO:0000256" key="2">
    <source>
        <dbReference type="SAM" id="MobiDB-lite"/>
    </source>
</evidence>
<evidence type="ECO:0000305" key="3"/>
<accession>Q3MF94</accession>
<proteinExistence type="inferred from homology"/>
<comment type="function">
    <text evidence="1">This protein is one of the early assembly proteins of the 50S ribosomal subunit, although it is not seen to bind rRNA by itself. It is important during the early stages of 50S assembly.</text>
</comment>
<comment type="subunit">
    <text evidence="1">Part of the 50S ribosomal subunit.</text>
</comment>
<comment type="similarity">
    <text evidence="1">Belongs to the universal ribosomal protein uL13 family.</text>
</comment>
<organism>
    <name type="scientific">Trichormus variabilis (strain ATCC 29413 / PCC 7937)</name>
    <name type="common">Anabaena variabilis</name>
    <dbReference type="NCBI Taxonomy" id="240292"/>
    <lineage>
        <taxon>Bacteria</taxon>
        <taxon>Bacillati</taxon>
        <taxon>Cyanobacteriota</taxon>
        <taxon>Cyanophyceae</taxon>
        <taxon>Nostocales</taxon>
        <taxon>Nostocaceae</taxon>
        <taxon>Trichormus</taxon>
    </lineage>
</organism>